<proteinExistence type="inferred from homology"/>
<feature type="chain" id="PRO_1000186961" description="Siroheme synthase">
    <location>
        <begin position="1"/>
        <end position="478"/>
    </location>
</feature>
<feature type="region of interest" description="Precorrin-2 dehydrogenase /sirohydrochlorin ferrochelatase" evidence="1">
    <location>
        <begin position="1"/>
        <end position="207"/>
    </location>
</feature>
<feature type="region of interest" description="Uroporphyrinogen-III C-methyltransferase" evidence="1">
    <location>
        <begin position="220"/>
        <end position="478"/>
    </location>
</feature>
<feature type="active site" description="Proton acceptor" evidence="1">
    <location>
        <position position="252"/>
    </location>
</feature>
<feature type="active site" description="Proton donor" evidence="1">
    <location>
        <position position="274"/>
    </location>
</feature>
<feature type="binding site" evidence="1">
    <location>
        <begin position="25"/>
        <end position="26"/>
    </location>
    <ligand>
        <name>NAD(+)</name>
        <dbReference type="ChEBI" id="CHEBI:57540"/>
    </ligand>
</feature>
<feature type="binding site" evidence="1">
    <location>
        <begin position="46"/>
        <end position="47"/>
    </location>
    <ligand>
        <name>NAD(+)</name>
        <dbReference type="ChEBI" id="CHEBI:57540"/>
    </ligand>
</feature>
<feature type="binding site" evidence="1">
    <location>
        <begin position="305"/>
        <end position="307"/>
    </location>
    <ligand>
        <name>S-adenosyl-L-methionine</name>
        <dbReference type="ChEBI" id="CHEBI:59789"/>
    </ligand>
</feature>
<feature type="binding site" evidence="1">
    <location>
        <position position="310"/>
    </location>
    <ligand>
        <name>S-adenosyl-L-methionine</name>
        <dbReference type="ChEBI" id="CHEBI:59789"/>
    </ligand>
</feature>
<feature type="binding site" evidence="1">
    <location>
        <begin position="335"/>
        <end position="336"/>
    </location>
    <ligand>
        <name>S-adenosyl-L-methionine</name>
        <dbReference type="ChEBI" id="CHEBI:59789"/>
    </ligand>
</feature>
<feature type="binding site" evidence="1">
    <location>
        <position position="387"/>
    </location>
    <ligand>
        <name>S-adenosyl-L-methionine</name>
        <dbReference type="ChEBI" id="CHEBI:59789"/>
    </ligand>
</feature>
<feature type="binding site" evidence="1">
    <location>
        <position position="416"/>
    </location>
    <ligand>
        <name>S-adenosyl-L-methionine</name>
        <dbReference type="ChEBI" id="CHEBI:59789"/>
    </ligand>
</feature>
<feature type="modified residue" description="Phosphoserine" evidence="1">
    <location>
        <position position="132"/>
    </location>
</feature>
<accession>B2I985</accession>
<keyword id="KW-0169">Cobalamin biosynthesis</keyword>
<keyword id="KW-0456">Lyase</keyword>
<keyword id="KW-0489">Methyltransferase</keyword>
<keyword id="KW-0511">Multifunctional enzyme</keyword>
<keyword id="KW-0520">NAD</keyword>
<keyword id="KW-0560">Oxidoreductase</keyword>
<keyword id="KW-0597">Phosphoprotein</keyword>
<keyword id="KW-0627">Porphyrin biosynthesis</keyword>
<keyword id="KW-0949">S-adenosyl-L-methionine</keyword>
<keyword id="KW-0808">Transferase</keyword>
<sequence>MTANVLFPLFANLHDRAVLVVGGGKVAERKTEALLKVGALPIIGAPSLTASLQRWAETGRITWRQGTFENSWLQEDIWLVIAATDQPEVNHAAARAAHAQRLFVNVVDDIALSNVQVPAVVERGPLRIAISSGGGAPMVARYLRQQLESLIDDSWGRLTTLFAQRRDTIRARYPNIEARRRFFETQLAGPLQRLLRKQRHAEAEAVLEAALAKTPPTESGSVTLVGAGAGDAGLLTLNALRALNEADIILYDRLVSDTVLQMARRDAEQIEVGKSATGHSVRQEDIHTLMLQHARAGQRVVRLKGGDPFVFGRGGEELEFLRTHGIPYEVIPGITAALACAAYAGIPLTHRDHAQSLCLITAHCQSSLDTLNWAALAQERQTLAFYMGVAGLPTIQQRLCEAGRTETTPFALIENGARAQQRVLTGTLKTLAHTAQTYAVRPPALLILGEVTALAEHLHWFGTTPLSAPCPPRTHPIS</sequence>
<protein>
    <recommendedName>
        <fullName evidence="1">Siroheme synthase</fullName>
    </recommendedName>
    <domain>
        <recommendedName>
            <fullName evidence="1">Uroporphyrinogen-III C-methyltransferase</fullName>
            <shortName evidence="1">Urogen III methylase</shortName>
            <ecNumber evidence="1">2.1.1.107</ecNumber>
        </recommendedName>
        <alternativeName>
            <fullName evidence="1">SUMT</fullName>
        </alternativeName>
        <alternativeName>
            <fullName evidence="1">Uroporphyrinogen III methylase</fullName>
            <shortName evidence="1">UROM</shortName>
        </alternativeName>
    </domain>
    <domain>
        <recommendedName>
            <fullName evidence="1">Precorrin-2 dehydrogenase</fullName>
            <ecNumber evidence="1">1.3.1.76</ecNumber>
        </recommendedName>
    </domain>
    <domain>
        <recommendedName>
            <fullName evidence="1">Sirohydrochlorin ferrochelatase</fullName>
            <ecNumber evidence="1">4.99.1.4</ecNumber>
        </recommendedName>
    </domain>
</protein>
<comment type="function">
    <text evidence="1">Multifunctional enzyme that catalyzes the SAM-dependent methylations of uroporphyrinogen III at position C-2 and C-7 to form precorrin-2 via precorrin-1. Then it catalyzes the NAD-dependent ring dehydrogenation of precorrin-2 to yield sirohydrochlorin. Finally, it catalyzes the ferrochelation of sirohydrochlorin to yield siroheme.</text>
</comment>
<comment type="catalytic activity">
    <reaction evidence="1">
        <text>uroporphyrinogen III + 2 S-adenosyl-L-methionine = precorrin-2 + 2 S-adenosyl-L-homocysteine + H(+)</text>
        <dbReference type="Rhea" id="RHEA:32459"/>
        <dbReference type="ChEBI" id="CHEBI:15378"/>
        <dbReference type="ChEBI" id="CHEBI:57308"/>
        <dbReference type="ChEBI" id="CHEBI:57856"/>
        <dbReference type="ChEBI" id="CHEBI:58827"/>
        <dbReference type="ChEBI" id="CHEBI:59789"/>
        <dbReference type="EC" id="2.1.1.107"/>
    </reaction>
</comment>
<comment type="catalytic activity">
    <reaction evidence="1">
        <text>precorrin-2 + NAD(+) = sirohydrochlorin + NADH + 2 H(+)</text>
        <dbReference type="Rhea" id="RHEA:15613"/>
        <dbReference type="ChEBI" id="CHEBI:15378"/>
        <dbReference type="ChEBI" id="CHEBI:57540"/>
        <dbReference type="ChEBI" id="CHEBI:57945"/>
        <dbReference type="ChEBI" id="CHEBI:58351"/>
        <dbReference type="ChEBI" id="CHEBI:58827"/>
        <dbReference type="EC" id="1.3.1.76"/>
    </reaction>
</comment>
<comment type="catalytic activity">
    <reaction evidence="1">
        <text>siroheme + 2 H(+) = sirohydrochlorin + Fe(2+)</text>
        <dbReference type="Rhea" id="RHEA:24360"/>
        <dbReference type="ChEBI" id="CHEBI:15378"/>
        <dbReference type="ChEBI" id="CHEBI:29033"/>
        <dbReference type="ChEBI" id="CHEBI:58351"/>
        <dbReference type="ChEBI" id="CHEBI:60052"/>
        <dbReference type="EC" id="4.99.1.4"/>
    </reaction>
</comment>
<comment type="pathway">
    <text evidence="1">Cofactor biosynthesis; adenosylcobalamin biosynthesis; precorrin-2 from uroporphyrinogen III: step 1/1.</text>
</comment>
<comment type="pathway">
    <text evidence="1">Cofactor biosynthesis; adenosylcobalamin biosynthesis; sirohydrochlorin from precorrin-2: step 1/1.</text>
</comment>
<comment type="pathway">
    <text evidence="1">Porphyrin-containing compound metabolism; siroheme biosynthesis; precorrin-2 from uroporphyrinogen III: step 1/1.</text>
</comment>
<comment type="pathway">
    <text evidence="1">Porphyrin-containing compound metabolism; siroheme biosynthesis; siroheme from sirohydrochlorin: step 1/1.</text>
</comment>
<comment type="pathway">
    <text evidence="1">Porphyrin-containing compound metabolism; siroheme biosynthesis; sirohydrochlorin from precorrin-2: step 1/1.</text>
</comment>
<comment type="similarity">
    <text evidence="1">In the N-terminal section; belongs to the precorrin-2 dehydrogenase / sirohydrochlorin ferrochelatase family.</text>
</comment>
<comment type="similarity">
    <text evidence="1">In the C-terminal section; belongs to the precorrin methyltransferase family.</text>
</comment>
<gene>
    <name evidence="1" type="primary">cysG</name>
    <name type="ordered locus">XfasM23_1941</name>
</gene>
<reference key="1">
    <citation type="journal article" date="2010" name="J. Bacteriol.">
        <title>Whole genome sequences of two Xylella fastidiosa strains (M12 and M23) causing almond leaf scorch disease in California.</title>
        <authorList>
            <person name="Chen J."/>
            <person name="Xie G."/>
            <person name="Han S."/>
            <person name="Chertkov O."/>
            <person name="Sims D."/>
            <person name="Civerolo E.L."/>
        </authorList>
    </citation>
    <scope>NUCLEOTIDE SEQUENCE [LARGE SCALE GENOMIC DNA]</scope>
    <source>
        <strain>M23</strain>
    </source>
</reference>
<name>CYSG_XYLF2</name>
<evidence type="ECO:0000255" key="1">
    <source>
        <dbReference type="HAMAP-Rule" id="MF_01646"/>
    </source>
</evidence>
<dbReference type="EC" id="2.1.1.107" evidence="1"/>
<dbReference type="EC" id="1.3.1.76" evidence="1"/>
<dbReference type="EC" id="4.99.1.4" evidence="1"/>
<dbReference type="EMBL" id="CP001011">
    <property type="protein sequence ID" value="ACB93340.1"/>
    <property type="molecule type" value="Genomic_DNA"/>
</dbReference>
<dbReference type="RefSeq" id="WP_004088148.1">
    <property type="nucleotide sequence ID" value="NC_010577.1"/>
</dbReference>
<dbReference type="SMR" id="B2I985"/>
<dbReference type="GeneID" id="93905695"/>
<dbReference type="KEGG" id="xfn:XfasM23_1941"/>
<dbReference type="HOGENOM" id="CLU_011276_2_0_6"/>
<dbReference type="UniPathway" id="UPA00148">
    <property type="reaction ID" value="UER00211"/>
</dbReference>
<dbReference type="UniPathway" id="UPA00148">
    <property type="reaction ID" value="UER00222"/>
</dbReference>
<dbReference type="UniPathway" id="UPA00262">
    <property type="reaction ID" value="UER00211"/>
</dbReference>
<dbReference type="UniPathway" id="UPA00262">
    <property type="reaction ID" value="UER00222"/>
</dbReference>
<dbReference type="UniPathway" id="UPA00262">
    <property type="reaction ID" value="UER00376"/>
</dbReference>
<dbReference type="Proteomes" id="UP000001698">
    <property type="component" value="Chromosome"/>
</dbReference>
<dbReference type="GO" id="GO:0051287">
    <property type="term" value="F:NAD binding"/>
    <property type="evidence" value="ECO:0007669"/>
    <property type="project" value="InterPro"/>
</dbReference>
<dbReference type="GO" id="GO:0043115">
    <property type="term" value="F:precorrin-2 dehydrogenase activity"/>
    <property type="evidence" value="ECO:0007669"/>
    <property type="project" value="UniProtKB-UniRule"/>
</dbReference>
<dbReference type="GO" id="GO:0051266">
    <property type="term" value="F:sirohydrochlorin ferrochelatase activity"/>
    <property type="evidence" value="ECO:0007669"/>
    <property type="project" value="UniProtKB-EC"/>
</dbReference>
<dbReference type="GO" id="GO:0004851">
    <property type="term" value="F:uroporphyrin-III C-methyltransferase activity"/>
    <property type="evidence" value="ECO:0007669"/>
    <property type="project" value="UniProtKB-UniRule"/>
</dbReference>
<dbReference type="GO" id="GO:0009236">
    <property type="term" value="P:cobalamin biosynthetic process"/>
    <property type="evidence" value="ECO:0007669"/>
    <property type="project" value="UniProtKB-UniRule"/>
</dbReference>
<dbReference type="GO" id="GO:0032259">
    <property type="term" value="P:methylation"/>
    <property type="evidence" value="ECO:0007669"/>
    <property type="project" value="UniProtKB-KW"/>
</dbReference>
<dbReference type="GO" id="GO:0019354">
    <property type="term" value="P:siroheme biosynthetic process"/>
    <property type="evidence" value="ECO:0007669"/>
    <property type="project" value="UniProtKB-UniRule"/>
</dbReference>
<dbReference type="CDD" id="cd11642">
    <property type="entry name" value="SUMT"/>
    <property type="match status" value="1"/>
</dbReference>
<dbReference type="FunFam" id="3.30.950.10:FF:000001">
    <property type="entry name" value="Siroheme synthase"/>
    <property type="match status" value="1"/>
</dbReference>
<dbReference type="FunFam" id="3.40.1010.10:FF:000001">
    <property type="entry name" value="Siroheme synthase"/>
    <property type="match status" value="1"/>
</dbReference>
<dbReference type="Gene3D" id="3.40.1010.10">
    <property type="entry name" value="Cobalt-precorrin-4 Transmethylase, Domain 1"/>
    <property type="match status" value="1"/>
</dbReference>
<dbReference type="Gene3D" id="3.30.950.10">
    <property type="entry name" value="Methyltransferase, Cobalt-precorrin-4 Transmethylase, Domain 2"/>
    <property type="match status" value="1"/>
</dbReference>
<dbReference type="Gene3D" id="3.40.50.720">
    <property type="entry name" value="NAD(P)-binding Rossmann-like Domain"/>
    <property type="match status" value="1"/>
</dbReference>
<dbReference type="Gene3D" id="1.10.8.210">
    <property type="entry name" value="Sirohaem synthase, dimerisation domain"/>
    <property type="match status" value="1"/>
</dbReference>
<dbReference type="Gene3D" id="3.30.160.110">
    <property type="entry name" value="Siroheme synthase, domain 2"/>
    <property type="match status" value="1"/>
</dbReference>
<dbReference type="HAMAP" id="MF_01646">
    <property type="entry name" value="Siroheme_synth"/>
    <property type="match status" value="1"/>
</dbReference>
<dbReference type="InterPro" id="IPR000878">
    <property type="entry name" value="4pyrrol_Mease"/>
</dbReference>
<dbReference type="InterPro" id="IPR035996">
    <property type="entry name" value="4pyrrol_Methylase_sf"/>
</dbReference>
<dbReference type="InterPro" id="IPR014777">
    <property type="entry name" value="4pyrrole_Mease_sub1"/>
</dbReference>
<dbReference type="InterPro" id="IPR014776">
    <property type="entry name" value="4pyrrole_Mease_sub2"/>
</dbReference>
<dbReference type="InterPro" id="IPR006366">
    <property type="entry name" value="CobA/CysG_C"/>
</dbReference>
<dbReference type="InterPro" id="IPR036291">
    <property type="entry name" value="NAD(P)-bd_dom_sf"/>
</dbReference>
<dbReference type="InterPro" id="IPR050161">
    <property type="entry name" value="Siro_Cobalamin_biosynth"/>
</dbReference>
<dbReference type="InterPro" id="IPR037115">
    <property type="entry name" value="Sirohaem_synt_dimer_dom_sf"/>
</dbReference>
<dbReference type="InterPro" id="IPR012409">
    <property type="entry name" value="Sirohaem_synth"/>
</dbReference>
<dbReference type="InterPro" id="IPR028281">
    <property type="entry name" value="Sirohaem_synthase_central"/>
</dbReference>
<dbReference type="InterPro" id="IPR019478">
    <property type="entry name" value="Sirohaem_synthase_dimer_dom"/>
</dbReference>
<dbReference type="InterPro" id="IPR006367">
    <property type="entry name" value="Sirohaem_synthase_N"/>
</dbReference>
<dbReference type="InterPro" id="IPR003043">
    <property type="entry name" value="Uropor_MeTrfase_CS"/>
</dbReference>
<dbReference type="NCBIfam" id="TIGR01469">
    <property type="entry name" value="cobA_cysG_Cterm"/>
    <property type="match status" value="1"/>
</dbReference>
<dbReference type="NCBIfam" id="TIGR01470">
    <property type="entry name" value="cysG_Nterm"/>
    <property type="match status" value="1"/>
</dbReference>
<dbReference type="NCBIfam" id="NF004790">
    <property type="entry name" value="PRK06136.1"/>
    <property type="match status" value="1"/>
</dbReference>
<dbReference type="NCBIfam" id="NF007922">
    <property type="entry name" value="PRK10637.1"/>
    <property type="match status" value="1"/>
</dbReference>
<dbReference type="PANTHER" id="PTHR45790:SF1">
    <property type="entry name" value="SIROHEME SYNTHASE"/>
    <property type="match status" value="1"/>
</dbReference>
<dbReference type="PANTHER" id="PTHR45790">
    <property type="entry name" value="SIROHEME SYNTHASE-RELATED"/>
    <property type="match status" value="1"/>
</dbReference>
<dbReference type="Pfam" id="PF10414">
    <property type="entry name" value="CysG_dimeriser"/>
    <property type="match status" value="1"/>
</dbReference>
<dbReference type="Pfam" id="PF13241">
    <property type="entry name" value="NAD_binding_7"/>
    <property type="match status" value="1"/>
</dbReference>
<dbReference type="Pfam" id="PF14824">
    <property type="entry name" value="Sirohm_synth_M"/>
    <property type="match status" value="1"/>
</dbReference>
<dbReference type="Pfam" id="PF00590">
    <property type="entry name" value="TP_methylase"/>
    <property type="match status" value="1"/>
</dbReference>
<dbReference type="PIRSF" id="PIRSF036426">
    <property type="entry name" value="Sirohaem_synth"/>
    <property type="match status" value="1"/>
</dbReference>
<dbReference type="SUPFAM" id="SSF51735">
    <property type="entry name" value="NAD(P)-binding Rossmann-fold domains"/>
    <property type="match status" value="1"/>
</dbReference>
<dbReference type="SUPFAM" id="SSF75615">
    <property type="entry name" value="Siroheme synthase middle domains-like"/>
    <property type="match status" value="1"/>
</dbReference>
<dbReference type="SUPFAM" id="SSF53790">
    <property type="entry name" value="Tetrapyrrole methylase"/>
    <property type="match status" value="1"/>
</dbReference>
<dbReference type="PROSITE" id="PS00840">
    <property type="entry name" value="SUMT_2"/>
    <property type="match status" value="1"/>
</dbReference>
<organism>
    <name type="scientific">Xylella fastidiosa (strain M23)</name>
    <dbReference type="NCBI Taxonomy" id="405441"/>
    <lineage>
        <taxon>Bacteria</taxon>
        <taxon>Pseudomonadati</taxon>
        <taxon>Pseudomonadota</taxon>
        <taxon>Gammaproteobacteria</taxon>
        <taxon>Lysobacterales</taxon>
        <taxon>Lysobacteraceae</taxon>
        <taxon>Xylella</taxon>
    </lineage>
</organism>